<evidence type="ECO:0000255" key="1">
    <source>
        <dbReference type="HAMAP-Rule" id="MF_00115"/>
    </source>
</evidence>
<protein>
    <recommendedName>
        <fullName evidence="1">Large-conductance mechanosensitive channel</fullName>
    </recommendedName>
</protein>
<sequence>MGIAKEFREFAVKGNVIDLAVGVIIGGAFGKIVDSLVNDVIMPIVGLVFGRLDFSNLFLVLGSVPPGTPATLDALRKAGVPVLAHGSFITVAVNFLILAFIIFMMVKQINRLKRAAPPAPPATPAAPPEDIVLLREIRDSLRR</sequence>
<keyword id="KW-0997">Cell inner membrane</keyword>
<keyword id="KW-1003">Cell membrane</keyword>
<keyword id="KW-0407">Ion channel</keyword>
<keyword id="KW-0406">Ion transport</keyword>
<keyword id="KW-0472">Membrane</keyword>
<keyword id="KW-0812">Transmembrane</keyword>
<keyword id="KW-1133">Transmembrane helix</keyword>
<keyword id="KW-0813">Transport</keyword>
<gene>
    <name evidence="1" type="primary">mscL</name>
    <name type="ordered locus">Aave_3697</name>
</gene>
<reference key="1">
    <citation type="submission" date="2006-12" db="EMBL/GenBank/DDBJ databases">
        <title>Complete sequence of Acidovorax avenae subsp. citrulli AAC00-1.</title>
        <authorList>
            <person name="Copeland A."/>
            <person name="Lucas S."/>
            <person name="Lapidus A."/>
            <person name="Barry K."/>
            <person name="Detter J.C."/>
            <person name="Glavina del Rio T."/>
            <person name="Dalin E."/>
            <person name="Tice H."/>
            <person name="Pitluck S."/>
            <person name="Kiss H."/>
            <person name="Brettin T."/>
            <person name="Bruce D."/>
            <person name="Han C."/>
            <person name="Tapia R."/>
            <person name="Gilna P."/>
            <person name="Schmutz J."/>
            <person name="Larimer F."/>
            <person name="Land M."/>
            <person name="Hauser L."/>
            <person name="Kyrpides N."/>
            <person name="Kim E."/>
            <person name="Stahl D."/>
            <person name="Richardson P."/>
        </authorList>
    </citation>
    <scope>NUCLEOTIDE SEQUENCE [LARGE SCALE GENOMIC DNA]</scope>
    <source>
        <strain>AAC00-1</strain>
    </source>
</reference>
<proteinExistence type="inferred from homology"/>
<accession>A1TTF7</accession>
<dbReference type="EMBL" id="CP000512">
    <property type="protein sequence ID" value="ABM34245.1"/>
    <property type="molecule type" value="Genomic_DNA"/>
</dbReference>
<dbReference type="RefSeq" id="WP_011796739.1">
    <property type="nucleotide sequence ID" value="NC_008752.1"/>
</dbReference>
<dbReference type="SMR" id="A1TTF7"/>
<dbReference type="STRING" id="397945.Aave_3697"/>
<dbReference type="KEGG" id="aav:Aave_3697"/>
<dbReference type="eggNOG" id="COG1970">
    <property type="taxonomic scope" value="Bacteria"/>
</dbReference>
<dbReference type="HOGENOM" id="CLU_095787_0_1_4"/>
<dbReference type="OrthoDB" id="9810350at2"/>
<dbReference type="Proteomes" id="UP000002596">
    <property type="component" value="Chromosome"/>
</dbReference>
<dbReference type="GO" id="GO:0005886">
    <property type="term" value="C:plasma membrane"/>
    <property type="evidence" value="ECO:0007669"/>
    <property type="project" value="UniProtKB-SubCell"/>
</dbReference>
<dbReference type="GO" id="GO:0008381">
    <property type="term" value="F:mechanosensitive monoatomic ion channel activity"/>
    <property type="evidence" value="ECO:0007669"/>
    <property type="project" value="UniProtKB-UniRule"/>
</dbReference>
<dbReference type="Gene3D" id="1.10.1200.120">
    <property type="entry name" value="Large-conductance mechanosensitive channel, MscL, domain 1"/>
    <property type="match status" value="1"/>
</dbReference>
<dbReference type="HAMAP" id="MF_00115">
    <property type="entry name" value="MscL"/>
    <property type="match status" value="1"/>
</dbReference>
<dbReference type="InterPro" id="IPR019823">
    <property type="entry name" value="Mechanosensitive_channel_CS"/>
</dbReference>
<dbReference type="InterPro" id="IPR001185">
    <property type="entry name" value="MS_channel"/>
</dbReference>
<dbReference type="InterPro" id="IPR037673">
    <property type="entry name" value="MSC/AndL"/>
</dbReference>
<dbReference type="InterPro" id="IPR036019">
    <property type="entry name" value="MscL_channel"/>
</dbReference>
<dbReference type="NCBIfam" id="TIGR00220">
    <property type="entry name" value="mscL"/>
    <property type="match status" value="1"/>
</dbReference>
<dbReference type="NCBIfam" id="NF001843">
    <property type="entry name" value="PRK00567.1-4"/>
    <property type="match status" value="1"/>
</dbReference>
<dbReference type="NCBIfam" id="NF010557">
    <property type="entry name" value="PRK13952.1"/>
    <property type="match status" value="1"/>
</dbReference>
<dbReference type="PANTHER" id="PTHR30266:SF2">
    <property type="entry name" value="LARGE-CONDUCTANCE MECHANOSENSITIVE CHANNEL"/>
    <property type="match status" value="1"/>
</dbReference>
<dbReference type="PANTHER" id="PTHR30266">
    <property type="entry name" value="MECHANOSENSITIVE CHANNEL MSCL"/>
    <property type="match status" value="1"/>
</dbReference>
<dbReference type="Pfam" id="PF01741">
    <property type="entry name" value="MscL"/>
    <property type="match status" value="1"/>
</dbReference>
<dbReference type="PRINTS" id="PR01264">
    <property type="entry name" value="MECHCHANNEL"/>
</dbReference>
<dbReference type="SUPFAM" id="SSF81330">
    <property type="entry name" value="Gated mechanosensitive channel"/>
    <property type="match status" value="1"/>
</dbReference>
<dbReference type="PROSITE" id="PS01327">
    <property type="entry name" value="MSCL"/>
    <property type="match status" value="1"/>
</dbReference>
<name>MSCL_PARC0</name>
<organism>
    <name type="scientific">Paracidovorax citrulli (strain AAC00-1)</name>
    <name type="common">Acidovorax citrulli</name>
    <dbReference type="NCBI Taxonomy" id="397945"/>
    <lineage>
        <taxon>Bacteria</taxon>
        <taxon>Pseudomonadati</taxon>
        <taxon>Pseudomonadota</taxon>
        <taxon>Betaproteobacteria</taxon>
        <taxon>Burkholderiales</taxon>
        <taxon>Comamonadaceae</taxon>
        <taxon>Paracidovorax</taxon>
    </lineage>
</organism>
<feature type="chain" id="PRO_1000015345" description="Large-conductance mechanosensitive channel">
    <location>
        <begin position="1"/>
        <end position="143"/>
    </location>
</feature>
<feature type="transmembrane region" description="Helical" evidence="1">
    <location>
        <begin position="10"/>
        <end position="30"/>
    </location>
</feature>
<feature type="transmembrane region" description="Helical" evidence="1">
    <location>
        <begin position="40"/>
        <end position="60"/>
    </location>
</feature>
<feature type="transmembrane region" description="Helical" evidence="1">
    <location>
        <begin position="86"/>
        <end position="106"/>
    </location>
</feature>
<comment type="function">
    <text evidence="1">Channel that opens in response to stretch forces in the membrane lipid bilayer. May participate in the regulation of osmotic pressure changes within the cell.</text>
</comment>
<comment type="subunit">
    <text evidence="1">Homopentamer.</text>
</comment>
<comment type="subcellular location">
    <subcellularLocation>
        <location evidence="1">Cell inner membrane</location>
        <topology evidence="1">Multi-pass membrane protein</topology>
    </subcellularLocation>
</comment>
<comment type="similarity">
    <text evidence="1">Belongs to the MscL family.</text>
</comment>